<proteinExistence type="evidence at transcript level"/>
<protein>
    <recommendedName>
        <fullName>Glycogen debranching enzyme</fullName>
    </recommendedName>
    <alternativeName>
        <fullName>Glycogen debrancher</fullName>
    </alternativeName>
    <domain>
        <recommendedName>
            <fullName>4-alpha-glucanotransferase</fullName>
            <ecNumber>2.4.1.25</ecNumber>
        </recommendedName>
        <alternativeName>
            <fullName>Oligo-1,4-1,4-glucantransferase</fullName>
        </alternativeName>
    </domain>
    <domain>
        <recommendedName>
            <fullName>Amylo-alpha-1,6-glucosidase</fullName>
            <shortName>Amylo-1,6-glucosidase</shortName>
            <ecNumber>3.2.1.33</ecNumber>
        </recommendedName>
        <alternativeName>
            <fullName>Dextrin 6-alpha-D-glucosidase</fullName>
        </alternativeName>
    </domain>
</protein>
<accession>Q2PQH8</accession>
<reference key="1">
    <citation type="journal article" date="2007" name="J. Vet. Intern. Med.">
        <title>Glycogen storage disease type IIIa in curly-coated retrievers.</title>
        <authorList>
            <person name="Gregory B.L."/>
            <person name="Shelton G.D."/>
            <person name="Bali D.S."/>
            <person name="Chen Y.T."/>
            <person name="Fyfe J.C."/>
        </authorList>
    </citation>
    <scope>NUCLEOTIDE SEQUENCE [MRNA]</scope>
</reference>
<feature type="chain" id="PRO_0000232710" description="Glycogen debranching enzyme">
    <location>
        <begin position="1"/>
        <end position="1533"/>
    </location>
</feature>
<feature type="region of interest" description="4-alpha-glucanotransferase">
    <location>
        <begin position="1"/>
        <end status="unknown"/>
    </location>
</feature>
<feature type="region of interest" description="Amylo-1,6-glucosidase">
    <location>
        <begin status="unknown"/>
        <end position="1533"/>
    </location>
</feature>
<feature type="active site" evidence="1">
    <location>
        <position position="527"/>
    </location>
</feature>
<feature type="active site" evidence="1">
    <location>
        <position position="530"/>
    </location>
</feature>
<feature type="active site" evidence="1">
    <location>
        <position position="628"/>
    </location>
</feature>
<feature type="modified residue" description="Phosphoserine" evidence="2">
    <location>
        <position position="64"/>
    </location>
</feature>
<keyword id="KW-0963">Cytoplasm</keyword>
<keyword id="KW-0320">Glycogen biosynthesis</keyword>
<keyword id="KW-0322">Glycogen storage disease</keyword>
<keyword id="KW-0326">Glycosidase</keyword>
<keyword id="KW-0328">Glycosyltransferase</keyword>
<keyword id="KW-0378">Hydrolase</keyword>
<keyword id="KW-0511">Multifunctional enzyme</keyword>
<keyword id="KW-0597">Phosphoprotein</keyword>
<keyword id="KW-1185">Reference proteome</keyword>
<keyword id="KW-0808">Transferase</keyword>
<keyword id="KW-0832">Ubl conjugation</keyword>
<sequence>MGHSKQIRILLLNEMEKLEKTLFRLEQGFELQFRLGPTLQGKAVTVYTNYPFPGETFNREKFRSLEWENPTEREDDSDKYCKLNLQQAGSFQYYFLQGNEKSGGGYIVVDPILYVGADNHVLPLDCVTLQTFLAKCLGPFDEWESRLRVAKESGYNMIHFTPLQTLGLSRSCYSLANQLELNPDFSRPNKKYTWSDVGQLVEKMKKEWNVLCITDVVYNHTAANSKWIQEHPESAYNLVNSPHLKPAWVLDRALWHLSCDVAEGKYKEKGVPALIENDHQMNCIRKIIWEDIFPKIQLWEFFQVDVYKAVEQFRRLLTQENRKITTKPDPKEHLKIIQDPEYRRLGCTVDMNIALATFIPHDKGPAAIDECCNWFRKRIEELNSEKHQLVNYHQEQAVNCLLGNVFYERMAGHGPKLGPVTRKHPLVTRYFTFPFEEMTVSTEESMIHNPNKACFLMAHNGWVMGDDPLRNFAEPGSEVYLRRELICWGDSVKLRYGNKPEDCPYLWAHMKKYTEITATYFQGVRLDNCHSTPLHVAEYMLDAARKLQPNLYVVAELFTGSEDLDNIFVTRLGISSLIREAMSAYNSHEEGRLVYRYGGEPVGSFVQPCLRPLMPAIAHALFMDITHDNECPIVHRSEYDALPSTTIVSMACCASGSTKGYDELVPHQISVVSEERFYTKWNPGASPSNTGEVNFQSGIIAARCAINKLHQELGAQGFIQVYVDQVDEDIVAVTRHSPSIHQSVVSVSRTAFRNPKTSFYSKEVPQMCIPGKIEEVVLEARTIERNTKPYQKDKNSINGMPNITVEIREHIQLSESKIVKQAGVATKGPNEYIQEIEFENLSPGSVIIFRVSLDPHAQVAVGILRNHLTQFSPHFKSGSLAVENSDPILKIPFAFIASKLTLAELNQVLYRCEAEEQEDGGGCYDIPNWSSLKYAGLQGLMSVLAEIRPKNDLGHPFCDNLRSGDWMIDYVSNRLISRSGTIAEVGKWFQAMFFYLKQIPRYLIPCYFDAILIGAYTTLLDIAWKQMSSFVQNGSTFVKHLSLGSVQMCGVGKCPSLPLLSPSLMDVPYRLNEITKEKEQCCVSLAAGLPHFSSGIFRCWGRDTFIALRGLLLITGRYLEARNIILAFAGTLRHGLIPNLLGEGTYARYNCRDAVWWWLQCIQDYCKMVPNGLDILKCPVSRMYPTDDSVPLSAGTLDQPLFEVIQEVMQRHIQGIQFRERNAGPQIDRNMKDEGFNITAGVDEETGFVYGGNRLNCGTWMDKMGESDRARNRGIPATPRDGSAVEIVGLSKSTVRWLLELSKKRIFPYHEVRVKRHGKVVTISYDEWNKKIQDNFEKLFHVSEDPXDFNEKHPNLVHKRGIYKDSYGASSPWCDYQLRPNFTIAMVVAPELFTAEKAWKALEIAEKKLLGPLGMKTLDPDDMVYCGIYDNALDNDNYNLAKGFNYHQGPEWLWPVGYFLRAKLYFSKLMGPEANAKTVFLVKNILSRHYVHLERSPWKGLPELTNENGQYCPFSCETQAWSIATVLETLYDL</sequence>
<organism>
    <name type="scientific">Canis lupus familiaris</name>
    <name type="common">Dog</name>
    <name type="synonym">Canis familiaris</name>
    <dbReference type="NCBI Taxonomy" id="9615"/>
    <lineage>
        <taxon>Eukaryota</taxon>
        <taxon>Metazoa</taxon>
        <taxon>Chordata</taxon>
        <taxon>Craniata</taxon>
        <taxon>Vertebrata</taxon>
        <taxon>Euteleostomi</taxon>
        <taxon>Mammalia</taxon>
        <taxon>Eutheria</taxon>
        <taxon>Laurasiatheria</taxon>
        <taxon>Carnivora</taxon>
        <taxon>Caniformia</taxon>
        <taxon>Canidae</taxon>
        <taxon>Canis</taxon>
    </lineage>
</organism>
<comment type="function">
    <text evidence="1">Multifunctional enzyme acting as 1,4-alpha-D-glucan:1,4-alpha-D-glucan 4-alpha-D-glycosyltransferase and amylo-1,6-glucosidase in glycogen degradation.</text>
</comment>
<comment type="catalytic activity">
    <reaction>
        <text>Transfers a segment of a (1-&gt;4)-alpha-D-glucan to a new position in an acceptor, which may be glucose or a (1-&gt;4)-alpha-D-glucan.</text>
        <dbReference type="EC" id="2.4.1.25"/>
    </reaction>
</comment>
<comment type="catalytic activity">
    <reaction>
        <text>Hydrolysis of (1-&gt;6)-alpha-D-glucosidic branch linkages in glycogen phosphorylase limit dextrin.</text>
        <dbReference type="EC" id="3.2.1.33"/>
    </reaction>
</comment>
<comment type="subunit">
    <text evidence="1">Monomer. Interacts with NHLRC1/malin (By similarity).</text>
</comment>
<comment type="subcellular location">
    <subcellularLocation>
        <location evidence="1">Cytoplasm</location>
    </subcellularLocation>
    <text evidence="1">Under glycogenolytic conditions localizes to the nucleus.</text>
</comment>
<comment type="PTM">
    <text evidence="1">Ubiquitinated.</text>
</comment>
<comment type="similarity">
    <text evidence="3">Belongs to the glycogen debranching enzyme family.</text>
</comment>
<name>GDE_CANLF</name>
<gene>
    <name type="primary">AGL</name>
</gene>
<evidence type="ECO:0000250" key="1"/>
<evidence type="ECO:0000250" key="2">
    <source>
        <dbReference type="UniProtKB" id="P35573"/>
    </source>
</evidence>
<evidence type="ECO:0000305" key="3"/>
<dbReference type="EC" id="2.4.1.25"/>
<dbReference type="EC" id="3.2.1.33"/>
<dbReference type="EMBL" id="DQ307574">
    <property type="protein sequence ID" value="ABC25005.1"/>
    <property type="molecule type" value="mRNA"/>
</dbReference>
<dbReference type="RefSeq" id="NP_001041561.1">
    <property type="nucleotide sequence ID" value="NM_001048096.1"/>
</dbReference>
<dbReference type="FunCoup" id="Q2PQH8">
    <property type="interactions" value="1555"/>
</dbReference>
<dbReference type="STRING" id="9615.ENSCAFP00000029699"/>
<dbReference type="CAZy" id="GH13">
    <property type="family name" value="Glycoside Hydrolase Family 13"/>
</dbReference>
<dbReference type="CAZy" id="GH133">
    <property type="family name" value="Glycoside Hydrolase Family 133"/>
</dbReference>
<dbReference type="PaxDb" id="9612-ENSCAFP00000039212"/>
<dbReference type="GeneID" id="479931"/>
<dbReference type="KEGG" id="cfa:479931"/>
<dbReference type="CTD" id="178"/>
<dbReference type="eggNOG" id="KOG3625">
    <property type="taxonomic scope" value="Eukaryota"/>
</dbReference>
<dbReference type="InParanoid" id="Q2PQH8"/>
<dbReference type="OrthoDB" id="10248904at2759"/>
<dbReference type="Proteomes" id="UP000002254">
    <property type="component" value="Unplaced"/>
</dbReference>
<dbReference type="Proteomes" id="UP000694429">
    <property type="component" value="Unplaced"/>
</dbReference>
<dbReference type="Proteomes" id="UP000694542">
    <property type="component" value="Unplaced"/>
</dbReference>
<dbReference type="Proteomes" id="UP000805418">
    <property type="component" value="Unplaced"/>
</dbReference>
<dbReference type="GO" id="GO:0005737">
    <property type="term" value="C:cytoplasm"/>
    <property type="evidence" value="ECO:0000250"/>
    <property type="project" value="UniProtKB"/>
</dbReference>
<dbReference type="GO" id="GO:0004134">
    <property type="term" value="F:4-alpha-glucanotransferase activity"/>
    <property type="evidence" value="ECO:0000318"/>
    <property type="project" value="GO_Central"/>
</dbReference>
<dbReference type="GO" id="GO:0004135">
    <property type="term" value="F:amylo-alpha-1,6-glucosidase activity"/>
    <property type="evidence" value="ECO:0000318"/>
    <property type="project" value="GO_Central"/>
</dbReference>
<dbReference type="GO" id="GO:0005978">
    <property type="term" value="P:glycogen biosynthetic process"/>
    <property type="evidence" value="ECO:0007669"/>
    <property type="project" value="UniProtKB-KW"/>
</dbReference>
<dbReference type="GO" id="GO:0005980">
    <property type="term" value="P:glycogen catabolic process"/>
    <property type="evidence" value="ECO:0000318"/>
    <property type="project" value="GO_Central"/>
</dbReference>
<dbReference type="CDD" id="cd11327">
    <property type="entry name" value="AmyAc_Glg_debranch_2"/>
    <property type="match status" value="1"/>
</dbReference>
<dbReference type="FunFam" id="3.20.20.80:FF:000291">
    <property type="entry name" value="Amylo-alpha-1, 6-glucosidase, 4-alpha-glucanotransferase a"/>
    <property type="match status" value="1"/>
</dbReference>
<dbReference type="FunFam" id="1.50.10.10:FF:000039">
    <property type="entry name" value="Glycogen debranching enzyme Gdb1, putative"/>
    <property type="match status" value="1"/>
</dbReference>
<dbReference type="FunFam" id="3.20.20.80:FF:000051">
    <property type="entry name" value="glycogen debranching enzyme isoform X2"/>
    <property type="match status" value="1"/>
</dbReference>
<dbReference type="Gene3D" id="3.20.20.80">
    <property type="entry name" value="Glycosidases"/>
    <property type="match status" value="2"/>
</dbReference>
<dbReference type="InterPro" id="IPR008928">
    <property type="entry name" value="6-hairpin_glycosidase_sf"/>
</dbReference>
<dbReference type="InterPro" id="IPR010401">
    <property type="entry name" value="AGL/Gdb1"/>
</dbReference>
<dbReference type="InterPro" id="IPR032788">
    <property type="entry name" value="AGL_central"/>
</dbReference>
<dbReference type="InterPro" id="IPR029436">
    <property type="entry name" value="AGL_euk_N"/>
</dbReference>
<dbReference type="InterPro" id="IPR032792">
    <property type="entry name" value="AGL_glucanoTrfase"/>
</dbReference>
<dbReference type="InterPro" id="IPR032790">
    <property type="entry name" value="GDE_C"/>
</dbReference>
<dbReference type="InterPro" id="IPR006421">
    <property type="entry name" value="Glycogen_debranch_met"/>
</dbReference>
<dbReference type="InterPro" id="IPR017853">
    <property type="entry name" value="Glycoside_hydrolase_SF"/>
</dbReference>
<dbReference type="NCBIfam" id="TIGR01531">
    <property type="entry name" value="glyc_debranch"/>
    <property type="match status" value="1"/>
</dbReference>
<dbReference type="PANTHER" id="PTHR10569">
    <property type="entry name" value="GLYCOGEN DEBRANCHING ENZYME"/>
    <property type="match status" value="1"/>
</dbReference>
<dbReference type="PANTHER" id="PTHR10569:SF2">
    <property type="entry name" value="GLYCOGEN DEBRANCHING ENZYME"/>
    <property type="match status" value="1"/>
</dbReference>
<dbReference type="Pfam" id="PF06202">
    <property type="entry name" value="GDE_C"/>
    <property type="match status" value="1"/>
</dbReference>
<dbReference type="Pfam" id="PF14701">
    <property type="entry name" value="hDGE_amylase"/>
    <property type="match status" value="1"/>
</dbReference>
<dbReference type="Pfam" id="PF14702">
    <property type="entry name" value="hGDE_central"/>
    <property type="match status" value="1"/>
</dbReference>
<dbReference type="Pfam" id="PF14699">
    <property type="entry name" value="hGDE_N"/>
    <property type="match status" value="1"/>
</dbReference>
<dbReference type="SUPFAM" id="SSF51445">
    <property type="entry name" value="(Trans)glycosidases"/>
    <property type="match status" value="1"/>
</dbReference>
<dbReference type="SUPFAM" id="SSF48208">
    <property type="entry name" value="Six-hairpin glycosidases"/>
    <property type="match status" value="1"/>
</dbReference>